<organism>
    <name type="scientific">Salinispora arenicola (strain CNS-205)</name>
    <dbReference type="NCBI Taxonomy" id="391037"/>
    <lineage>
        <taxon>Bacteria</taxon>
        <taxon>Bacillati</taxon>
        <taxon>Actinomycetota</taxon>
        <taxon>Actinomycetes</taxon>
        <taxon>Micromonosporales</taxon>
        <taxon>Micromonosporaceae</taxon>
        <taxon>Salinispora</taxon>
    </lineage>
</organism>
<name>MSHA_SALAI</name>
<keyword id="KW-0328">Glycosyltransferase</keyword>
<keyword id="KW-0460">Magnesium</keyword>
<keyword id="KW-0479">Metal-binding</keyword>
<keyword id="KW-0808">Transferase</keyword>
<sequence length="448" mass="47533">MAEQHTGVGRQRGARPWPRPRRVATLSVHTSPLHQPGTGDAGGMNVYILEVARRLAEADVEVEIFTRATSADVPPVVEMMPGVHVRNIISGPLGGLTKEELPGQLCAFTAGVLRAEASRAAGHYDLIHSHYWLSGQVGWLAKERWGVPLVHTAHTLAKVKNAQLAAGDRPEPKARVIGEEQVVAEADRLVANTKTEAGDLIDRYDADPTRVEVVEPGVDLARFTPAAGDRSRAQALARRRLGLPERGYVVAFVGRVQPLKAPDVLIRAAAALRQRDPALAEELTVVVCGGPSGSGLDRPTHLIELAASLGVTDSVRFLPPQTGDDLPALYRAADLVAVPSYNESFGLVALEAQACGTPVVAAAVGGLVTAVRDQVSGVLVDGHDPAVWARTLSRLLPDTGLRATLAQGARRHACNFSWDRTVSGLLEVYGEAVAAYGPQSSELATCSC</sequence>
<evidence type="ECO:0000255" key="1">
    <source>
        <dbReference type="HAMAP-Rule" id="MF_01695"/>
    </source>
</evidence>
<evidence type="ECO:0000256" key="2">
    <source>
        <dbReference type="SAM" id="MobiDB-lite"/>
    </source>
</evidence>
<reference key="1">
    <citation type="submission" date="2007-10" db="EMBL/GenBank/DDBJ databases">
        <title>Complete sequence of Salinispora arenicola CNS-205.</title>
        <authorList>
            <consortium name="US DOE Joint Genome Institute"/>
            <person name="Copeland A."/>
            <person name="Lucas S."/>
            <person name="Lapidus A."/>
            <person name="Barry K."/>
            <person name="Glavina del Rio T."/>
            <person name="Dalin E."/>
            <person name="Tice H."/>
            <person name="Pitluck S."/>
            <person name="Foster B."/>
            <person name="Schmutz J."/>
            <person name="Larimer F."/>
            <person name="Land M."/>
            <person name="Hauser L."/>
            <person name="Kyrpides N."/>
            <person name="Ivanova N."/>
            <person name="Jensen P.R."/>
            <person name="Moore B.S."/>
            <person name="Penn K."/>
            <person name="Jenkins C."/>
            <person name="Udwary D."/>
            <person name="Xiang L."/>
            <person name="Gontang E."/>
            <person name="Richardson P."/>
        </authorList>
    </citation>
    <scope>NUCLEOTIDE SEQUENCE [LARGE SCALE GENOMIC DNA]</scope>
    <source>
        <strain>CNS-205</strain>
    </source>
</reference>
<comment type="function">
    <text evidence="1">Catalyzes the transfer of a N-acetyl-glucosamine moiety to 1D-myo-inositol 3-phosphate to produce 1D-myo-inositol 2-acetamido-2-deoxy-glucopyranoside 3-phosphate in the mycothiol biosynthesis pathway.</text>
</comment>
<comment type="catalytic activity">
    <reaction evidence="1">
        <text>1D-myo-inositol 3-phosphate + UDP-N-acetyl-alpha-D-glucosamine = 1D-myo-inositol 2-acetamido-2-deoxy-alpha-D-glucopyranoside 3-phosphate + UDP + H(+)</text>
        <dbReference type="Rhea" id="RHEA:26188"/>
        <dbReference type="ChEBI" id="CHEBI:15378"/>
        <dbReference type="ChEBI" id="CHEBI:57705"/>
        <dbReference type="ChEBI" id="CHEBI:58223"/>
        <dbReference type="ChEBI" id="CHEBI:58401"/>
        <dbReference type="ChEBI" id="CHEBI:58892"/>
        <dbReference type="EC" id="2.4.1.250"/>
    </reaction>
</comment>
<comment type="subunit">
    <text evidence="1">Homodimer.</text>
</comment>
<comment type="similarity">
    <text evidence="1">Belongs to the glycosyltransferase group 1 family. MshA subfamily.</text>
</comment>
<protein>
    <recommendedName>
        <fullName>D-inositol 3-phosphate glycosyltransferase</fullName>
        <ecNumber evidence="1">2.4.1.250</ecNumber>
    </recommendedName>
    <alternativeName>
        <fullName evidence="1">N-acetylglucosamine-inositol-phosphate N-acetylglucosaminyltransferase</fullName>
        <shortName evidence="1">GlcNAc-Ins-P N-acetylglucosaminyltransferase</shortName>
    </alternativeName>
</protein>
<proteinExistence type="inferred from homology"/>
<dbReference type="EC" id="2.4.1.250" evidence="1"/>
<dbReference type="EMBL" id="CP000850">
    <property type="protein sequence ID" value="ABV96327.1"/>
    <property type="molecule type" value="Genomic_DNA"/>
</dbReference>
<dbReference type="SMR" id="A8LZG1"/>
<dbReference type="STRING" id="391037.Sare_0398"/>
<dbReference type="CAZy" id="GT4">
    <property type="family name" value="Glycosyltransferase Family 4"/>
</dbReference>
<dbReference type="KEGG" id="saq:Sare_0398"/>
<dbReference type="PATRIC" id="fig|391037.6.peg.405"/>
<dbReference type="eggNOG" id="COG0438">
    <property type="taxonomic scope" value="Bacteria"/>
</dbReference>
<dbReference type="HOGENOM" id="CLU_009583_2_3_11"/>
<dbReference type="OrthoDB" id="9810929at2"/>
<dbReference type="GO" id="GO:0008375">
    <property type="term" value="F:acetylglucosaminyltransferase activity"/>
    <property type="evidence" value="ECO:0007669"/>
    <property type="project" value="UniProtKB-UniRule"/>
</dbReference>
<dbReference type="GO" id="GO:0102710">
    <property type="term" value="F:D-inositol-3-phosphate glycosyltransferase activity"/>
    <property type="evidence" value="ECO:0007669"/>
    <property type="project" value="UniProtKB-EC"/>
</dbReference>
<dbReference type="GO" id="GO:0000287">
    <property type="term" value="F:magnesium ion binding"/>
    <property type="evidence" value="ECO:0007669"/>
    <property type="project" value="UniProtKB-UniRule"/>
</dbReference>
<dbReference type="GO" id="GO:0010125">
    <property type="term" value="P:mycothiol biosynthetic process"/>
    <property type="evidence" value="ECO:0007669"/>
    <property type="project" value="UniProtKB-UniRule"/>
</dbReference>
<dbReference type="CDD" id="cd03800">
    <property type="entry name" value="GT4_sucrose_synthase"/>
    <property type="match status" value="1"/>
</dbReference>
<dbReference type="Gene3D" id="3.40.50.2000">
    <property type="entry name" value="Glycogen Phosphorylase B"/>
    <property type="match status" value="2"/>
</dbReference>
<dbReference type="HAMAP" id="MF_01695">
    <property type="entry name" value="MshA"/>
    <property type="match status" value="1"/>
</dbReference>
<dbReference type="InterPro" id="IPR001296">
    <property type="entry name" value="Glyco_trans_1"/>
</dbReference>
<dbReference type="InterPro" id="IPR028098">
    <property type="entry name" value="Glyco_trans_4-like_N"/>
</dbReference>
<dbReference type="InterPro" id="IPR017814">
    <property type="entry name" value="Mycothiol_biosynthesis_MshA"/>
</dbReference>
<dbReference type="NCBIfam" id="TIGR03449">
    <property type="entry name" value="mycothiol_MshA"/>
    <property type="match status" value="1"/>
</dbReference>
<dbReference type="PANTHER" id="PTHR12526:SF510">
    <property type="entry name" value="D-INOSITOL 3-PHOSPHATE GLYCOSYLTRANSFERASE"/>
    <property type="match status" value="1"/>
</dbReference>
<dbReference type="PANTHER" id="PTHR12526">
    <property type="entry name" value="GLYCOSYLTRANSFERASE"/>
    <property type="match status" value="1"/>
</dbReference>
<dbReference type="Pfam" id="PF13579">
    <property type="entry name" value="Glyco_trans_4_4"/>
    <property type="match status" value="1"/>
</dbReference>
<dbReference type="Pfam" id="PF00534">
    <property type="entry name" value="Glycos_transf_1"/>
    <property type="match status" value="1"/>
</dbReference>
<dbReference type="SUPFAM" id="SSF53756">
    <property type="entry name" value="UDP-Glycosyltransferase/glycogen phosphorylase"/>
    <property type="match status" value="1"/>
</dbReference>
<feature type="chain" id="PRO_0000400155" description="D-inositol 3-phosphate glycosyltransferase">
    <location>
        <begin position="1"/>
        <end position="448"/>
    </location>
</feature>
<feature type="region of interest" description="Disordered" evidence="2">
    <location>
        <begin position="1"/>
        <end position="21"/>
    </location>
</feature>
<feature type="binding site" evidence="1">
    <location>
        <position position="29"/>
    </location>
    <ligand>
        <name>1D-myo-inositol 3-phosphate</name>
        <dbReference type="ChEBI" id="CHEBI:58401"/>
    </ligand>
</feature>
<feature type="binding site" evidence="1">
    <location>
        <begin position="35"/>
        <end position="36"/>
    </location>
    <ligand>
        <name>UDP-N-acetyl-alpha-D-glucosamine</name>
        <dbReference type="ChEBI" id="CHEBI:57705"/>
    </ligand>
</feature>
<feature type="binding site" evidence="1">
    <location>
        <begin position="40"/>
        <end position="45"/>
    </location>
    <ligand>
        <name>1D-myo-inositol 3-phosphate</name>
        <dbReference type="ChEBI" id="CHEBI:58401"/>
    </ligand>
</feature>
<feature type="binding site" evidence="1">
    <location>
        <position position="43"/>
    </location>
    <ligand>
        <name>UDP-N-acetyl-alpha-D-glucosamine</name>
        <dbReference type="ChEBI" id="CHEBI:57705"/>
    </ligand>
</feature>
<feature type="binding site" evidence="1">
    <location>
        <position position="98"/>
    </location>
    <ligand>
        <name>1D-myo-inositol 3-phosphate</name>
        <dbReference type="ChEBI" id="CHEBI:58401"/>
    </ligand>
</feature>
<feature type="binding site" evidence="1">
    <location>
        <position position="131"/>
    </location>
    <ligand>
        <name>1D-myo-inositol 3-phosphate</name>
        <dbReference type="ChEBI" id="CHEBI:58401"/>
    </ligand>
</feature>
<feature type="binding site" evidence="1">
    <location>
        <position position="155"/>
    </location>
    <ligand>
        <name>1D-myo-inositol 3-phosphate</name>
        <dbReference type="ChEBI" id="CHEBI:58401"/>
    </ligand>
</feature>
<feature type="binding site" evidence="1">
    <location>
        <position position="175"/>
    </location>
    <ligand>
        <name>1D-myo-inositol 3-phosphate</name>
        <dbReference type="ChEBI" id="CHEBI:58401"/>
    </ligand>
</feature>
<feature type="binding site" evidence="1">
    <location>
        <position position="255"/>
    </location>
    <ligand>
        <name>UDP-N-acetyl-alpha-D-glucosamine</name>
        <dbReference type="ChEBI" id="CHEBI:57705"/>
    </ligand>
</feature>
<feature type="binding site" evidence="1">
    <location>
        <position position="260"/>
    </location>
    <ligand>
        <name>UDP-N-acetyl-alpha-D-glucosamine</name>
        <dbReference type="ChEBI" id="CHEBI:57705"/>
    </ligand>
</feature>
<feature type="binding site" evidence="1">
    <location>
        <position position="321"/>
    </location>
    <ligand>
        <name>UDP-N-acetyl-alpha-D-glucosamine</name>
        <dbReference type="ChEBI" id="CHEBI:57705"/>
    </ligand>
</feature>
<feature type="binding site" evidence="1">
    <location>
        <position position="330"/>
    </location>
    <ligand>
        <name>Mg(2+)</name>
        <dbReference type="ChEBI" id="CHEBI:18420"/>
    </ligand>
</feature>
<feature type="binding site" evidence="1">
    <location>
        <position position="331"/>
    </location>
    <ligand>
        <name>Mg(2+)</name>
        <dbReference type="ChEBI" id="CHEBI:18420"/>
    </ligand>
</feature>
<feature type="binding site" evidence="1">
    <location>
        <position position="333"/>
    </location>
    <ligand>
        <name>Mg(2+)</name>
        <dbReference type="ChEBI" id="CHEBI:18420"/>
    </ligand>
</feature>
<feature type="binding site" evidence="1">
    <location>
        <position position="343"/>
    </location>
    <ligand>
        <name>UDP-N-acetyl-alpha-D-glucosamine</name>
        <dbReference type="ChEBI" id="CHEBI:57705"/>
    </ligand>
</feature>
<feature type="binding site" evidence="1">
    <location>
        <position position="351"/>
    </location>
    <ligand>
        <name>UDP-N-acetyl-alpha-D-glucosamine</name>
        <dbReference type="ChEBI" id="CHEBI:57705"/>
    </ligand>
</feature>
<feature type="binding site" evidence="1">
    <location>
        <position position="357"/>
    </location>
    <ligand>
        <name>Mg(2+)</name>
        <dbReference type="ChEBI" id="CHEBI:18420"/>
    </ligand>
</feature>
<accession>A8LZG1</accession>
<gene>
    <name evidence="1" type="primary">mshA</name>
    <name type="ordered locus">Sare_0398</name>
</gene>